<comment type="function">
    <text evidence="1">This enzyme is involved in nucleotide metabolism: it produces dUMP, the immediate precursor of thymidine nucleotides and it decreases the intracellular concentration of dUTP so that uracil cannot be incorporated into DNA.</text>
</comment>
<comment type="catalytic activity">
    <reaction evidence="1">
        <text>dUTP + H2O = dUMP + diphosphate + H(+)</text>
        <dbReference type="Rhea" id="RHEA:10248"/>
        <dbReference type="ChEBI" id="CHEBI:15377"/>
        <dbReference type="ChEBI" id="CHEBI:15378"/>
        <dbReference type="ChEBI" id="CHEBI:33019"/>
        <dbReference type="ChEBI" id="CHEBI:61555"/>
        <dbReference type="ChEBI" id="CHEBI:246422"/>
        <dbReference type="EC" id="3.6.1.23"/>
    </reaction>
</comment>
<comment type="cofactor">
    <cofactor evidence="1">
        <name>Mg(2+)</name>
        <dbReference type="ChEBI" id="CHEBI:18420"/>
    </cofactor>
</comment>
<comment type="pathway">
    <text evidence="1">Pyrimidine metabolism; dUMP biosynthesis; dUMP from dCTP (dUTP route): step 2/2.</text>
</comment>
<comment type="similarity">
    <text evidence="1">Belongs to the dUTPase family.</text>
</comment>
<feature type="chain" id="PRO_1000015449" description="Deoxyuridine 5'-triphosphate nucleotidohydrolase">
    <location>
        <begin position="1"/>
        <end position="148"/>
    </location>
</feature>
<feature type="binding site" evidence="1">
    <location>
        <begin position="67"/>
        <end position="69"/>
    </location>
    <ligand>
        <name>substrate</name>
    </ligand>
</feature>
<feature type="binding site" evidence="1">
    <location>
        <position position="80"/>
    </location>
    <ligand>
        <name>substrate</name>
    </ligand>
</feature>
<feature type="binding site" evidence="1">
    <location>
        <begin position="84"/>
        <end position="86"/>
    </location>
    <ligand>
        <name>substrate</name>
    </ligand>
</feature>
<feature type="binding site" evidence="1">
    <location>
        <position position="94"/>
    </location>
    <ligand>
        <name>substrate</name>
    </ligand>
</feature>
<protein>
    <recommendedName>
        <fullName evidence="1">Deoxyuridine 5'-triphosphate nucleotidohydrolase</fullName>
        <shortName evidence="1">dUTPase</shortName>
        <ecNumber evidence="1">3.6.1.23</ecNumber>
    </recommendedName>
    <alternativeName>
        <fullName evidence="1">dUTP pyrophosphatase</fullName>
    </alternativeName>
</protein>
<proteinExistence type="inferred from homology"/>
<gene>
    <name evidence="1" type="primary">dut</name>
    <name type="ordered locus">Bcen_1904</name>
</gene>
<keyword id="KW-0378">Hydrolase</keyword>
<keyword id="KW-0460">Magnesium</keyword>
<keyword id="KW-0479">Metal-binding</keyword>
<keyword id="KW-0546">Nucleotide metabolism</keyword>
<name>DUT_BURO1</name>
<dbReference type="EC" id="3.6.1.23" evidence="1"/>
<dbReference type="EMBL" id="CP000378">
    <property type="protein sequence ID" value="ABF76807.1"/>
    <property type="molecule type" value="Genomic_DNA"/>
</dbReference>
<dbReference type="SMR" id="Q1BU98"/>
<dbReference type="HOGENOM" id="CLU_068508_1_1_4"/>
<dbReference type="UniPathway" id="UPA00610">
    <property type="reaction ID" value="UER00666"/>
</dbReference>
<dbReference type="GO" id="GO:0004170">
    <property type="term" value="F:dUTP diphosphatase activity"/>
    <property type="evidence" value="ECO:0007669"/>
    <property type="project" value="UniProtKB-UniRule"/>
</dbReference>
<dbReference type="GO" id="GO:0000287">
    <property type="term" value="F:magnesium ion binding"/>
    <property type="evidence" value="ECO:0007669"/>
    <property type="project" value="UniProtKB-UniRule"/>
</dbReference>
<dbReference type="GO" id="GO:0006226">
    <property type="term" value="P:dUMP biosynthetic process"/>
    <property type="evidence" value="ECO:0007669"/>
    <property type="project" value="UniProtKB-UniRule"/>
</dbReference>
<dbReference type="GO" id="GO:0046081">
    <property type="term" value="P:dUTP catabolic process"/>
    <property type="evidence" value="ECO:0007669"/>
    <property type="project" value="InterPro"/>
</dbReference>
<dbReference type="CDD" id="cd07557">
    <property type="entry name" value="trimeric_dUTPase"/>
    <property type="match status" value="1"/>
</dbReference>
<dbReference type="FunFam" id="2.70.40.10:FF:000002">
    <property type="entry name" value="dUTP diphosphatase"/>
    <property type="match status" value="1"/>
</dbReference>
<dbReference type="Gene3D" id="2.70.40.10">
    <property type="match status" value="1"/>
</dbReference>
<dbReference type="HAMAP" id="MF_00116">
    <property type="entry name" value="dUTPase_bact"/>
    <property type="match status" value="1"/>
</dbReference>
<dbReference type="InterPro" id="IPR008181">
    <property type="entry name" value="dUTPase"/>
</dbReference>
<dbReference type="InterPro" id="IPR029054">
    <property type="entry name" value="dUTPase-like"/>
</dbReference>
<dbReference type="InterPro" id="IPR036157">
    <property type="entry name" value="dUTPase-like_sf"/>
</dbReference>
<dbReference type="InterPro" id="IPR033704">
    <property type="entry name" value="dUTPase_trimeric"/>
</dbReference>
<dbReference type="NCBIfam" id="TIGR00576">
    <property type="entry name" value="dut"/>
    <property type="match status" value="1"/>
</dbReference>
<dbReference type="NCBIfam" id="NF001862">
    <property type="entry name" value="PRK00601.1"/>
    <property type="match status" value="1"/>
</dbReference>
<dbReference type="PANTHER" id="PTHR11241">
    <property type="entry name" value="DEOXYURIDINE 5'-TRIPHOSPHATE NUCLEOTIDOHYDROLASE"/>
    <property type="match status" value="1"/>
</dbReference>
<dbReference type="PANTHER" id="PTHR11241:SF0">
    <property type="entry name" value="DEOXYURIDINE 5'-TRIPHOSPHATE NUCLEOTIDOHYDROLASE"/>
    <property type="match status" value="1"/>
</dbReference>
<dbReference type="Pfam" id="PF00692">
    <property type="entry name" value="dUTPase"/>
    <property type="match status" value="1"/>
</dbReference>
<dbReference type="SUPFAM" id="SSF51283">
    <property type="entry name" value="dUTPase-like"/>
    <property type="match status" value="1"/>
</dbReference>
<accession>Q1BU98</accession>
<evidence type="ECO:0000255" key="1">
    <source>
        <dbReference type="HAMAP-Rule" id="MF_00116"/>
    </source>
</evidence>
<organism>
    <name type="scientific">Burkholderia orbicola (strain AU 1054)</name>
    <dbReference type="NCBI Taxonomy" id="331271"/>
    <lineage>
        <taxon>Bacteria</taxon>
        <taxon>Pseudomonadati</taxon>
        <taxon>Pseudomonadota</taxon>
        <taxon>Betaproteobacteria</taxon>
        <taxon>Burkholderiales</taxon>
        <taxon>Burkholderiaceae</taxon>
        <taxon>Burkholderia</taxon>
        <taxon>Burkholderia cepacia complex</taxon>
        <taxon>Burkholderia orbicola</taxon>
    </lineage>
</organism>
<sequence>MKLDLKILDARMRDYLPAYATTGSAGLDLRACLDAPVTLQPGETTLVPTGLAIHLADPGYAALILPRSGLGHKHGIVLGNLVGLIDSDYQGQLMVSTWNRGQTAFVLNPFERLAQLVIVPVVQAQFNIVDEFTESDRGEGGFGSTGRH</sequence>
<reference key="1">
    <citation type="submission" date="2006-05" db="EMBL/GenBank/DDBJ databases">
        <title>Complete sequence of chromosome 1 of Burkholderia cenocepacia AU 1054.</title>
        <authorList>
            <consortium name="US DOE Joint Genome Institute"/>
            <person name="Copeland A."/>
            <person name="Lucas S."/>
            <person name="Lapidus A."/>
            <person name="Barry K."/>
            <person name="Detter J.C."/>
            <person name="Glavina del Rio T."/>
            <person name="Hammon N."/>
            <person name="Israni S."/>
            <person name="Dalin E."/>
            <person name="Tice H."/>
            <person name="Pitluck S."/>
            <person name="Chain P."/>
            <person name="Malfatti S."/>
            <person name="Shin M."/>
            <person name="Vergez L."/>
            <person name="Schmutz J."/>
            <person name="Larimer F."/>
            <person name="Land M."/>
            <person name="Hauser L."/>
            <person name="Kyrpides N."/>
            <person name="Lykidis A."/>
            <person name="LiPuma J.J."/>
            <person name="Konstantinidis K."/>
            <person name="Tiedje J.M."/>
            <person name="Richardson P."/>
        </authorList>
    </citation>
    <scope>NUCLEOTIDE SEQUENCE [LARGE SCALE GENOMIC DNA]</scope>
    <source>
        <strain>AU 1054</strain>
    </source>
</reference>